<feature type="initiator methionine" description="Removed" evidence="2">
    <location>
        <position position="1"/>
    </location>
</feature>
<feature type="chain" id="PRO_0000242652" description="Transmembrane protein 106B">
    <location>
        <begin position="2"/>
        <end position="275"/>
    </location>
</feature>
<feature type="topological domain" description="Cytoplasmic" evidence="3">
    <location>
        <begin position="2"/>
        <end position="97"/>
    </location>
</feature>
<feature type="transmembrane region" description="Helical" evidence="3">
    <location>
        <begin position="98"/>
        <end position="118"/>
    </location>
</feature>
<feature type="topological domain" description="Lumenal" evidence="3">
    <location>
        <begin position="119"/>
        <end position="275"/>
    </location>
</feature>
<feature type="region of interest" description="Disordered" evidence="4">
    <location>
        <begin position="1"/>
        <end position="24"/>
    </location>
</feature>
<feature type="modified residue" description="Phosphoserine" evidence="2">
    <location>
        <position position="34"/>
    </location>
</feature>
<feature type="lipid moiety-binding region" description="N-myristoyl glycine" evidence="2">
    <location>
        <position position="2"/>
    </location>
</feature>
<feature type="glycosylation site" description="N-linked (GlcNAc...) asparagine" evidence="3">
    <location>
        <position position="146"/>
    </location>
</feature>
<feature type="glycosylation site" description="N-linked (GlcNAc...) asparagine" evidence="3">
    <location>
        <position position="152"/>
    </location>
</feature>
<feature type="glycosylation site" description="N-linked (GlcNAc...) asparagine" evidence="3">
    <location>
        <position position="165"/>
    </location>
</feature>
<feature type="glycosylation site" description="N-linked (GlcNAc...) asparagine" evidence="7">
    <location>
        <position position="184"/>
    </location>
</feature>
<feature type="glycosylation site" description="N-linked (GlcNAc...) asparagine" evidence="3">
    <location>
        <position position="257"/>
    </location>
</feature>
<feature type="disulfide bond" evidence="2">
    <location>
        <begin position="215"/>
        <end position="254"/>
    </location>
</feature>
<gene>
    <name type="primary">Tmem106b</name>
</gene>
<comment type="function">
    <text evidence="1 5">Involved in dendrite morphogenesis and maintenance by regulating lysosomal trafficking. May act as a molecular brake for retrograde transport of late endosomes/lysosomes, possibly via its interaction with MAP6 (PubMed:24357581). In neurons, may also play a role in the regulation of lysosomal size and responsiveness to stress (By similarity). Required for proper lysosomal acidification (By similarity).</text>
</comment>
<comment type="function">
    <text evidence="1 5">In neurons, involved in the transport of late endosomes/lysosomes (PubMed:24357581). May be involved in dendrite morphogenesis and maintenance by regulating lysosomal trafficking (PubMed:24357581). May act as a molecular brake for retrograde transport of late endosomes/lysosomes, possibly via its interaction with MAP6 (PubMed:24357581). In motoneurons, may mediate the axonal transport of lysosomes and axonal sorting at the initial segment (By similarity). It remains unclear whether TMEM106B affects the transport of moving lysosomes in the anterograde or retrograde direction in neurites and whether it is particularly important in the sorting of lysosomes in axons or in dendrites (By similarity). In neurons, may also play a role in the regulation of lysosomal size and responsiveness to stress (By similarity). Required for proper lysosomal acidification (By similarity).</text>
</comment>
<comment type="subunit">
    <text evidence="2 5">Can form homomers (By similarity). Interacts (via N-terminus) with MAP6 (via C-terminus) (PubMed:24357581). Interacts (via C-terminus) with the vacuolar-type ATPase subunit ATP6AP1 (By similarity). Interacts (via N-terminus) with AP2M1 and CLTC (By similarity). Interacts with TMEM106C (By similarity).</text>
</comment>
<comment type="interaction">
    <interactant intactId="EBI-9316198">
        <id>Q6AYA5</id>
    </interactant>
    <interactant intactId="EBI-1638469">
        <id>Q63560</id>
        <label>Map6</label>
    </interactant>
    <organismsDiffer>false</organismsDiffer>
    <experiments>6</experiments>
</comment>
<comment type="subcellular location">
    <subcellularLocation>
        <location evidence="5">Late endosome membrane</location>
        <topology evidence="5">Single-pass type II membrane protein</topology>
    </subcellularLocation>
    <subcellularLocation>
        <location evidence="5">Lysosome membrane</location>
        <topology evidence="5">Single-pass type II membrane protein</topology>
    </subcellularLocation>
    <subcellularLocation>
        <location evidence="2">Cell membrane</location>
        <topology evidence="3">Single-pass type II membrane protein</topology>
    </subcellularLocation>
    <text evidence="2 5">Colocalizes with LAMP1 (PubMed:24357581). A small fraction resides on the cell surface (By similarity).</text>
</comment>
<comment type="tissue specificity">
    <text evidence="5">Expressed in cortical neurons (at protein level).</text>
</comment>
<comment type="similarity">
    <text evidence="6">Belongs to the TMEM106 family.</text>
</comment>
<sequence>MGKSLSHLPLHSNKEDGYDGVTSTDNMRNGLVSSEVRNEDGRSGDVSQFPYVEFTGRDSVTCPTCQGTGRIPRGQENQLVALIPYSDQRLRPRRTKLYVMASVFVCLLLSGLAVFFLFPRSIDVKYIGVKSAYVSYDSQKRMIYLNITNTLNITNNNYYSVEVENITAQVQFSKTVIGKARLSNITNIGPLDMKQIDYTVPTVIAEEMSYMYDFCTLPSIKVHNIVLMMQVTVTTAYFGHSEQISQERYQYVDCGRNTTYQLAQSEYLNVLQPQQ</sequence>
<keyword id="KW-1003">Cell membrane</keyword>
<keyword id="KW-1015">Disulfide bond</keyword>
<keyword id="KW-0967">Endosome</keyword>
<keyword id="KW-0325">Glycoprotein</keyword>
<keyword id="KW-0449">Lipoprotein</keyword>
<keyword id="KW-0458">Lysosome</keyword>
<keyword id="KW-0472">Membrane</keyword>
<keyword id="KW-0519">Myristate</keyword>
<keyword id="KW-0597">Phosphoprotein</keyword>
<keyword id="KW-1185">Reference proteome</keyword>
<keyword id="KW-0735">Signal-anchor</keyword>
<keyword id="KW-0812">Transmembrane</keyword>
<keyword id="KW-1133">Transmembrane helix</keyword>
<keyword id="KW-0813">Transport</keyword>
<proteinExistence type="evidence at protein level"/>
<dbReference type="EMBL" id="BC079127">
    <property type="protein sequence ID" value="AAH79127.1"/>
    <property type="molecule type" value="mRNA"/>
</dbReference>
<dbReference type="RefSeq" id="NP_001004267.1">
    <property type="nucleotide sequence ID" value="NM_001004267.1"/>
</dbReference>
<dbReference type="RefSeq" id="XP_038963435.1">
    <property type="nucleotide sequence ID" value="XM_039107507.2"/>
</dbReference>
<dbReference type="BioGRID" id="260125">
    <property type="interactions" value="1"/>
</dbReference>
<dbReference type="FunCoup" id="Q6AYA5">
    <property type="interactions" value="1232"/>
</dbReference>
<dbReference type="IntAct" id="Q6AYA5">
    <property type="interactions" value="3"/>
</dbReference>
<dbReference type="MINT" id="Q6AYA5"/>
<dbReference type="STRING" id="10116.ENSRNOP00000074432"/>
<dbReference type="GlyCosmos" id="Q6AYA5">
    <property type="glycosylation" value="5 sites, 7 glycans"/>
</dbReference>
<dbReference type="GlyGen" id="Q6AYA5">
    <property type="glycosylation" value="5 sites, 7 N-linked glycans (1 site)"/>
</dbReference>
<dbReference type="iPTMnet" id="Q6AYA5"/>
<dbReference type="PhosphoSitePlus" id="Q6AYA5"/>
<dbReference type="jPOST" id="Q6AYA5"/>
<dbReference type="PaxDb" id="10116-ENSRNOP00000008677"/>
<dbReference type="DNASU" id="312132"/>
<dbReference type="Ensembl" id="ENSRNOT00000008677.5">
    <property type="protein sequence ID" value="ENSRNOP00000008677.3"/>
    <property type="gene ID" value="ENSRNOG00000006206.8"/>
</dbReference>
<dbReference type="GeneID" id="312132"/>
<dbReference type="KEGG" id="rno:312132"/>
<dbReference type="UCSC" id="RGD:1303037">
    <property type="organism name" value="rat"/>
</dbReference>
<dbReference type="AGR" id="RGD:1303037"/>
<dbReference type="CTD" id="54664"/>
<dbReference type="RGD" id="1303037">
    <property type="gene designation" value="Tmem106b"/>
</dbReference>
<dbReference type="eggNOG" id="ENOG502QQRZ">
    <property type="taxonomic scope" value="Eukaryota"/>
</dbReference>
<dbReference type="GeneTree" id="ENSGT00940000158360"/>
<dbReference type="HOGENOM" id="CLU_089337_2_0_1"/>
<dbReference type="InParanoid" id="Q6AYA5"/>
<dbReference type="OMA" id="FGHSEQT"/>
<dbReference type="PRO" id="PR:Q6AYA5"/>
<dbReference type="Proteomes" id="UP000002494">
    <property type="component" value="Chromosome 4"/>
</dbReference>
<dbReference type="Bgee" id="ENSRNOG00000006206">
    <property type="expression patterns" value="Expressed in liver and 19 other cell types or tissues"/>
</dbReference>
<dbReference type="ExpressionAtlas" id="Q6AYA5">
    <property type="expression patterns" value="baseline and differential"/>
</dbReference>
<dbReference type="GO" id="GO:0031902">
    <property type="term" value="C:late endosome membrane"/>
    <property type="evidence" value="ECO:0007669"/>
    <property type="project" value="UniProtKB-SubCell"/>
</dbReference>
<dbReference type="GO" id="GO:0005765">
    <property type="term" value="C:lysosomal membrane"/>
    <property type="evidence" value="ECO:0000250"/>
    <property type="project" value="UniProtKB"/>
</dbReference>
<dbReference type="GO" id="GO:0005764">
    <property type="term" value="C:lysosome"/>
    <property type="evidence" value="ECO:0000250"/>
    <property type="project" value="UniProtKB"/>
</dbReference>
<dbReference type="GO" id="GO:0005886">
    <property type="term" value="C:plasma membrane"/>
    <property type="evidence" value="ECO:0007669"/>
    <property type="project" value="UniProtKB-SubCell"/>
</dbReference>
<dbReference type="GO" id="GO:0051117">
    <property type="term" value="F:ATPase binding"/>
    <property type="evidence" value="ECO:0000266"/>
    <property type="project" value="RGD"/>
</dbReference>
<dbReference type="GO" id="GO:0048813">
    <property type="term" value="P:dendrite morphogenesis"/>
    <property type="evidence" value="ECO:0000250"/>
    <property type="project" value="UniProtKB"/>
</dbReference>
<dbReference type="GO" id="GO:0007042">
    <property type="term" value="P:lysosomal lumen acidification"/>
    <property type="evidence" value="ECO:0000266"/>
    <property type="project" value="RGD"/>
</dbReference>
<dbReference type="GO" id="GO:1905146">
    <property type="term" value="P:lysosomal protein catabolic process"/>
    <property type="evidence" value="ECO:0000266"/>
    <property type="project" value="RGD"/>
</dbReference>
<dbReference type="GO" id="GO:0007041">
    <property type="term" value="P:lysosomal transport"/>
    <property type="evidence" value="ECO:0000266"/>
    <property type="project" value="RGD"/>
</dbReference>
<dbReference type="GO" id="GO:0032418">
    <property type="term" value="P:lysosome localization"/>
    <property type="evidence" value="ECO:0000250"/>
    <property type="project" value="UniProtKB"/>
</dbReference>
<dbReference type="GO" id="GO:0007040">
    <property type="term" value="P:lysosome organization"/>
    <property type="evidence" value="ECO:0000266"/>
    <property type="project" value="RGD"/>
</dbReference>
<dbReference type="GO" id="GO:0070050">
    <property type="term" value="P:neuron cellular homeostasis"/>
    <property type="evidence" value="ECO:0000266"/>
    <property type="project" value="RGD"/>
</dbReference>
<dbReference type="GO" id="GO:1900006">
    <property type="term" value="P:positive regulation of dendrite development"/>
    <property type="evidence" value="ECO:0000266"/>
    <property type="project" value="RGD"/>
</dbReference>
<dbReference type="GO" id="GO:1905671">
    <property type="term" value="P:regulation of lysosome organization"/>
    <property type="evidence" value="ECO:0000266"/>
    <property type="project" value="RGD"/>
</dbReference>
<dbReference type="InterPro" id="IPR009790">
    <property type="entry name" value="TMEM106"/>
</dbReference>
<dbReference type="InterPro" id="IPR048509">
    <property type="entry name" value="TMEM106_C"/>
</dbReference>
<dbReference type="InterPro" id="IPR048511">
    <property type="entry name" value="TMEM106_N"/>
</dbReference>
<dbReference type="PANTHER" id="PTHR28556">
    <property type="entry name" value="TRANSMEMBRANE PROTEIN 106B"/>
    <property type="match status" value="1"/>
</dbReference>
<dbReference type="PANTHER" id="PTHR28556:SF1">
    <property type="entry name" value="TRANSMEMBRANE PROTEIN 106B"/>
    <property type="match status" value="1"/>
</dbReference>
<dbReference type="Pfam" id="PF07092">
    <property type="entry name" value="TMEM106"/>
    <property type="match status" value="1"/>
</dbReference>
<dbReference type="Pfam" id="PF21002">
    <property type="entry name" value="TMEM106_N"/>
    <property type="match status" value="1"/>
</dbReference>
<dbReference type="SUPFAM" id="SSF117070">
    <property type="entry name" value="LEA14-like"/>
    <property type="match status" value="1"/>
</dbReference>
<accession>Q6AYA5</accession>
<evidence type="ECO:0000250" key="1">
    <source>
        <dbReference type="UniProtKB" id="Q80X71"/>
    </source>
</evidence>
<evidence type="ECO:0000250" key="2">
    <source>
        <dbReference type="UniProtKB" id="Q9NUM4"/>
    </source>
</evidence>
<evidence type="ECO:0000255" key="3"/>
<evidence type="ECO:0000256" key="4">
    <source>
        <dbReference type="SAM" id="MobiDB-lite"/>
    </source>
</evidence>
<evidence type="ECO:0000269" key="5">
    <source>
    </source>
</evidence>
<evidence type="ECO:0000305" key="6"/>
<evidence type="ECO:0007744" key="7">
    <source>
    </source>
</evidence>
<reference key="1">
    <citation type="journal article" date="2004" name="Genome Res.">
        <title>The status, quality, and expansion of the NIH full-length cDNA project: the Mammalian Gene Collection (MGC).</title>
        <authorList>
            <consortium name="The MGC Project Team"/>
        </authorList>
    </citation>
    <scope>NUCLEOTIDE SEQUENCE [LARGE SCALE MRNA]</scope>
    <source>
        <tissue>Kidney</tissue>
    </source>
</reference>
<reference key="2">
    <citation type="journal article" date="2013" name="J. Proteome Res.">
        <title>Site-specific glycan-peptide analysis for determination of N-glycoproteome heterogeneity.</title>
        <authorList>
            <person name="Parker B.L."/>
            <person name="Thaysen-Andersen M."/>
            <person name="Solis N."/>
            <person name="Scott N.E."/>
            <person name="Larsen M.R."/>
            <person name="Graham M.E."/>
            <person name="Packer N.H."/>
            <person name="Cordwell S.J."/>
        </authorList>
    </citation>
    <scope>GLYCOSYLATION [LARGE SCALE ANALYSIS] AT ASN-184</scope>
    <scope>IDENTIFICATION BY MASS SPECTROMETRY [LARGE SCALE ANALYSIS]</scope>
    <source>
        <tissue>Brain</tissue>
    </source>
</reference>
<reference key="3">
    <citation type="journal article" date="2014" name="EMBO J.">
        <title>The FTLD risk factor TMEM106B and MAP6 control dendritic trafficking of lysosomes.</title>
        <authorList>
            <person name="Schwenk B.M."/>
            <person name="Lang C.M."/>
            <person name="Hogl S."/>
            <person name="Tahirovic S."/>
            <person name="Orozco D."/>
            <person name="Rentzsch K."/>
            <person name="Lichtenthaler S.F."/>
            <person name="Hoogenraad C.C."/>
            <person name="Capell A."/>
            <person name="Haass C."/>
            <person name="Edbauer D."/>
        </authorList>
    </citation>
    <scope>FUNCTION</scope>
    <scope>INTERACTION WITH MAP6</scope>
    <scope>SUBCELLULAR LOCATION</scope>
    <scope>TISSUE SPECIFICITY</scope>
</reference>
<organism>
    <name type="scientific">Rattus norvegicus</name>
    <name type="common">Rat</name>
    <dbReference type="NCBI Taxonomy" id="10116"/>
    <lineage>
        <taxon>Eukaryota</taxon>
        <taxon>Metazoa</taxon>
        <taxon>Chordata</taxon>
        <taxon>Craniata</taxon>
        <taxon>Vertebrata</taxon>
        <taxon>Euteleostomi</taxon>
        <taxon>Mammalia</taxon>
        <taxon>Eutheria</taxon>
        <taxon>Euarchontoglires</taxon>
        <taxon>Glires</taxon>
        <taxon>Rodentia</taxon>
        <taxon>Myomorpha</taxon>
        <taxon>Muroidea</taxon>
        <taxon>Muridae</taxon>
        <taxon>Murinae</taxon>
        <taxon>Rattus</taxon>
    </lineage>
</organism>
<name>T106B_RAT</name>
<protein>
    <recommendedName>
        <fullName>Transmembrane protein 106B</fullName>
    </recommendedName>
</protein>